<proteinExistence type="inferred from homology"/>
<feature type="chain" id="PRO_1000188509" description="HMP-PP phosphatase">
    <location>
        <begin position="1"/>
        <end position="272"/>
    </location>
</feature>
<feature type="active site" description="Nucleophile" evidence="1">
    <location>
        <position position="8"/>
    </location>
</feature>
<feature type="binding site" evidence="1">
    <location>
        <position position="8"/>
    </location>
    <ligand>
        <name>Mg(2+)</name>
        <dbReference type="ChEBI" id="CHEBI:18420"/>
    </ligand>
</feature>
<feature type="binding site" evidence="1">
    <location>
        <position position="10"/>
    </location>
    <ligand>
        <name>Mg(2+)</name>
        <dbReference type="ChEBI" id="CHEBI:18420"/>
    </ligand>
</feature>
<feature type="binding site" evidence="1">
    <location>
        <position position="212"/>
    </location>
    <ligand>
        <name>Mg(2+)</name>
        <dbReference type="ChEBI" id="CHEBI:18420"/>
    </ligand>
</feature>
<comment type="function">
    <text evidence="1">Catalyzes the hydrolysis of 4-amino-2-methyl-5-hydroxymethylpyrimidine pyrophosphate (HMP-PP) to 4-amino-2-methyl-5-hydroxymethylpyrimidine phosphate (HMP-P).</text>
</comment>
<comment type="catalytic activity">
    <reaction evidence="1">
        <text>4-amino-2-methyl-5-(diphosphooxymethyl)pyrimidine + H2O = 4-amino-2-methyl-5-(phosphooxymethyl)pyrimidine + phosphate + H(+)</text>
        <dbReference type="Rhea" id="RHEA:27914"/>
        <dbReference type="ChEBI" id="CHEBI:15377"/>
        <dbReference type="ChEBI" id="CHEBI:15378"/>
        <dbReference type="ChEBI" id="CHEBI:43474"/>
        <dbReference type="ChEBI" id="CHEBI:57841"/>
        <dbReference type="ChEBI" id="CHEBI:58354"/>
    </reaction>
</comment>
<comment type="cofactor">
    <cofactor evidence="1">
        <name>Mg(2+)</name>
        <dbReference type="ChEBI" id="CHEBI:18420"/>
    </cofactor>
</comment>
<comment type="similarity">
    <text evidence="1">Belongs to the HAD-like hydrolase superfamily. Cof family.</text>
</comment>
<keyword id="KW-0378">Hydrolase</keyword>
<keyword id="KW-0460">Magnesium</keyword>
<keyword id="KW-0479">Metal-binding</keyword>
<evidence type="ECO:0000255" key="1">
    <source>
        <dbReference type="HAMAP-Rule" id="MF_01847"/>
    </source>
</evidence>
<gene>
    <name evidence="1" type="primary">cof</name>
    <name type="ordered locus">SG0468</name>
</gene>
<dbReference type="EC" id="3.6.1.-" evidence="1"/>
<dbReference type="EMBL" id="AM933173">
    <property type="protein sequence ID" value="CAR36367.1"/>
    <property type="molecule type" value="Genomic_DNA"/>
</dbReference>
<dbReference type="RefSeq" id="WP_000113030.1">
    <property type="nucleotide sequence ID" value="NC_011274.1"/>
</dbReference>
<dbReference type="SMR" id="B5R6V8"/>
<dbReference type="KEGG" id="seg:SG0468"/>
<dbReference type="HOGENOM" id="CLU_044146_5_2_6"/>
<dbReference type="Proteomes" id="UP000008321">
    <property type="component" value="Chromosome"/>
</dbReference>
<dbReference type="GO" id="GO:0002145">
    <property type="term" value="F:4-amino-5-hydroxymethyl-2-methylpyrimidine diphosphatase activity"/>
    <property type="evidence" value="ECO:0007669"/>
    <property type="project" value="RHEA"/>
</dbReference>
<dbReference type="GO" id="GO:0000287">
    <property type="term" value="F:magnesium ion binding"/>
    <property type="evidence" value="ECO:0000250"/>
    <property type="project" value="UniProtKB"/>
</dbReference>
<dbReference type="GO" id="GO:0016791">
    <property type="term" value="F:phosphatase activity"/>
    <property type="evidence" value="ECO:0000250"/>
    <property type="project" value="UniProtKB"/>
</dbReference>
<dbReference type="CDD" id="cd07516">
    <property type="entry name" value="HAD_Pase"/>
    <property type="match status" value="1"/>
</dbReference>
<dbReference type="FunFam" id="3.30.1240.10:FF:000002">
    <property type="entry name" value="HMP-PP phosphatase"/>
    <property type="match status" value="1"/>
</dbReference>
<dbReference type="Gene3D" id="3.30.1240.10">
    <property type="match status" value="1"/>
</dbReference>
<dbReference type="Gene3D" id="3.40.50.1000">
    <property type="entry name" value="HAD superfamily/HAD-like"/>
    <property type="match status" value="1"/>
</dbReference>
<dbReference type="HAMAP" id="MF_01847">
    <property type="entry name" value="HMP_PP_phosphat"/>
    <property type="match status" value="1"/>
</dbReference>
<dbReference type="InterPro" id="IPR000150">
    <property type="entry name" value="Cof"/>
</dbReference>
<dbReference type="InterPro" id="IPR036412">
    <property type="entry name" value="HAD-like_sf"/>
</dbReference>
<dbReference type="InterPro" id="IPR006379">
    <property type="entry name" value="HAD-SF_hydro_IIB"/>
</dbReference>
<dbReference type="InterPro" id="IPR023214">
    <property type="entry name" value="HAD_sf"/>
</dbReference>
<dbReference type="InterPro" id="IPR023938">
    <property type="entry name" value="HMP-PP_phosphatase"/>
</dbReference>
<dbReference type="NCBIfam" id="TIGR00099">
    <property type="entry name" value="Cof-subfamily"/>
    <property type="match status" value="1"/>
</dbReference>
<dbReference type="NCBIfam" id="TIGR01484">
    <property type="entry name" value="HAD-SF-IIB"/>
    <property type="match status" value="1"/>
</dbReference>
<dbReference type="NCBIfam" id="NF011705">
    <property type="entry name" value="PRK15126.1"/>
    <property type="match status" value="1"/>
</dbReference>
<dbReference type="PANTHER" id="PTHR47267">
    <property type="match status" value="1"/>
</dbReference>
<dbReference type="PANTHER" id="PTHR47267:SF2">
    <property type="entry name" value="HMP-PP PHOSPHATASE"/>
    <property type="match status" value="1"/>
</dbReference>
<dbReference type="Pfam" id="PF08282">
    <property type="entry name" value="Hydrolase_3"/>
    <property type="match status" value="1"/>
</dbReference>
<dbReference type="SFLD" id="SFLDG01140">
    <property type="entry name" value="C2.B:_Phosphomannomutase_and_P"/>
    <property type="match status" value="1"/>
</dbReference>
<dbReference type="SFLD" id="SFLDS00003">
    <property type="entry name" value="Haloacid_Dehalogenase"/>
    <property type="match status" value="1"/>
</dbReference>
<dbReference type="SUPFAM" id="SSF56784">
    <property type="entry name" value="HAD-like"/>
    <property type="match status" value="1"/>
</dbReference>
<dbReference type="PROSITE" id="PS01228">
    <property type="entry name" value="COF_1"/>
    <property type="match status" value="1"/>
</dbReference>
<dbReference type="PROSITE" id="PS01229">
    <property type="entry name" value="COF_2"/>
    <property type="match status" value="1"/>
</dbReference>
<sequence length="272" mass="30104">MARLAAFDMDGTLLMPDHHLGRETIATLARLRERDITLTFATGRHVLEMRHILGTLSLDAYLITGNGTRIHSLEGDVLHRQDLDPQVADTVMHHAWDTRASMHVFNDNGWFTGQEIPALLQAHVYSGFRYQVIDIKSIPAHQVTKICFCGDHDDLIRLRIQLNEALEERAHLCFSAVDCLEVLPLGCNKGSALAVLSNHLGLSLADCMAFGDAMNDREMLGSVGRGLIMGNAMPQLIAALPHLSVIGHCGNQAVSHFLTHWLDNPHLPYSPE</sequence>
<protein>
    <recommendedName>
        <fullName evidence="1">HMP-PP phosphatase</fullName>
        <ecNumber evidence="1">3.6.1.-</ecNumber>
    </recommendedName>
</protein>
<accession>B5R6V8</accession>
<organism>
    <name type="scientific">Salmonella gallinarum (strain 287/91 / NCTC 13346)</name>
    <dbReference type="NCBI Taxonomy" id="550538"/>
    <lineage>
        <taxon>Bacteria</taxon>
        <taxon>Pseudomonadati</taxon>
        <taxon>Pseudomonadota</taxon>
        <taxon>Gammaproteobacteria</taxon>
        <taxon>Enterobacterales</taxon>
        <taxon>Enterobacteriaceae</taxon>
        <taxon>Salmonella</taxon>
    </lineage>
</organism>
<reference key="1">
    <citation type="journal article" date="2008" name="Genome Res.">
        <title>Comparative genome analysis of Salmonella enteritidis PT4 and Salmonella gallinarum 287/91 provides insights into evolutionary and host adaptation pathways.</title>
        <authorList>
            <person name="Thomson N.R."/>
            <person name="Clayton D.J."/>
            <person name="Windhorst D."/>
            <person name="Vernikos G."/>
            <person name="Davidson S."/>
            <person name="Churcher C."/>
            <person name="Quail M.A."/>
            <person name="Stevens M."/>
            <person name="Jones M.A."/>
            <person name="Watson M."/>
            <person name="Barron A."/>
            <person name="Layton A."/>
            <person name="Pickard D."/>
            <person name="Kingsley R.A."/>
            <person name="Bignell A."/>
            <person name="Clark L."/>
            <person name="Harris B."/>
            <person name="Ormond D."/>
            <person name="Abdellah Z."/>
            <person name="Brooks K."/>
            <person name="Cherevach I."/>
            <person name="Chillingworth T."/>
            <person name="Woodward J."/>
            <person name="Norberczak H."/>
            <person name="Lord A."/>
            <person name="Arrowsmith C."/>
            <person name="Jagels K."/>
            <person name="Moule S."/>
            <person name="Mungall K."/>
            <person name="Saunders M."/>
            <person name="Whitehead S."/>
            <person name="Chabalgoity J.A."/>
            <person name="Maskell D."/>
            <person name="Humphreys T."/>
            <person name="Roberts M."/>
            <person name="Barrow P.A."/>
            <person name="Dougan G."/>
            <person name="Parkhill J."/>
        </authorList>
    </citation>
    <scope>NUCLEOTIDE SEQUENCE [LARGE SCALE GENOMIC DNA]</scope>
    <source>
        <strain>287/91 / NCTC 13346</strain>
    </source>
</reference>
<name>COF_SALG2</name>